<organism>
    <name type="scientific">Gluconobacter oxydans (strain 621H)</name>
    <name type="common">Gluconobacter suboxydans</name>
    <dbReference type="NCBI Taxonomy" id="290633"/>
    <lineage>
        <taxon>Bacteria</taxon>
        <taxon>Pseudomonadati</taxon>
        <taxon>Pseudomonadota</taxon>
        <taxon>Alphaproteobacteria</taxon>
        <taxon>Acetobacterales</taxon>
        <taxon>Acetobacteraceae</taxon>
        <taxon>Gluconobacter</taxon>
    </lineage>
</organism>
<proteinExistence type="inferred from homology"/>
<protein>
    <recommendedName>
        <fullName evidence="2">Formamidopyrimidine-DNA glycosylase</fullName>
        <shortName evidence="2">Fapy-DNA glycosylase</shortName>
        <ecNumber evidence="2">3.2.2.23</ecNumber>
    </recommendedName>
    <alternativeName>
        <fullName evidence="2">DNA-(apurinic or apyrimidinic site) lyase MutM</fullName>
        <shortName evidence="2">AP lyase MutM</shortName>
        <ecNumber evidence="2">4.2.99.18</ecNumber>
    </alternativeName>
</protein>
<gene>
    <name evidence="2" type="primary">mutM</name>
    <name evidence="2" type="synonym">fpg</name>
    <name type="ordered locus">GOX2500</name>
</gene>
<keyword id="KW-0227">DNA damage</keyword>
<keyword id="KW-0234">DNA repair</keyword>
<keyword id="KW-0238">DNA-binding</keyword>
<keyword id="KW-0326">Glycosidase</keyword>
<keyword id="KW-0378">Hydrolase</keyword>
<keyword id="KW-0456">Lyase</keyword>
<keyword id="KW-0479">Metal-binding</keyword>
<keyword id="KW-0511">Multifunctional enzyme</keyword>
<keyword id="KW-1185">Reference proteome</keyword>
<keyword id="KW-0862">Zinc</keyword>
<keyword id="KW-0863">Zinc-finger</keyword>
<reference key="1">
    <citation type="journal article" date="2005" name="Nat. Biotechnol.">
        <title>Complete genome sequence of the acetic acid bacterium Gluconobacter oxydans.</title>
        <authorList>
            <person name="Prust C."/>
            <person name="Hoffmeister M."/>
            <person name="Liesegang H."/>
            <person name="Wiezer A."/>
            <person name="Fricke W.F."/>
            <person name="Ehrenreich A."/>
            <person name="Gottschalk G."/>
            <person name="Deppenmeier U."/>
        </authorList>
    </citation>
    <scope>NUCLEOTIDE SEQUENCE [LARGE SCALE GENOMIC DNA]</scope>
    <source>
        <strain>621H</strain>
    </source>
</reference>
<sequence length="277" mass="30475">MPELPEVETVMRGFRDAFEGHRISHVTVNRPDLRWPFPADLREKLEGHHVLSFRRRAKYILVRLEGGWSMLLHLGMSGRLTIGRAGTNATPPAHEHLVLETDSGARAGLVDPRRFGMVDLVRTSEEDSHRLLAHLGMEPLSDAMTGPALAELFRGRRSPIKSALLDQKLIAGLGNIYVCEALFRCGIHPERQACTLTGEETAALAEAIPQILEQAIASGGSSLRDYVQADGTKGAFQDLHLVYGREGVPCPNCGAEHPIQRITQAGRSTFFCPTCQK</sequence>
<feature type="initiator methionine" description="Removed" evidence="1">
    <location>
        <position position="1"/>
    </location>
</feature>
<feature type="chain" id="PRO_0000228437" description="Formamidopyrimidine-DNA glycosylase">
    <location>
        <begin position="2"/>
        <end position="277"/>
    </location>
</feature>
<feature type="zinc finger region" description="FPG-type" evidence="2">
    <location>
        <begin position="241"/>
        <end position="277"/>
    </location>
</feature>
<feature type="active site" description="Schiff-base intermediate with DNA" evidence="2">
    <location>
        <position position="2"/>
    </location>
</feature>
<feature type="active site" description="Proton donor" evidence="2">
    <location>
        <position position="3"/>
    </location>
</feature>
<feature type="active site" description="Proton donor; for beta-elimination activity" evidence="2">
    <location>
        <position position="58"/>
    </location>
</feature>
<feature type="active site" description="Proton donor; for delta-elimination activity" evidence="2">
    <location>
        <position position="267"/>
    </location>
</feature>
<feature type="binding site" evidence="2">
    <location>
        <position position="94"/>
    </location>
    <ligand>
        <name>DNA</name>
        <dbReference type="ChEBI" id="CHEBI:16991"/>
    </ligand>
</feature>
<feature type="binding site" evidence="2">
    <location>
        <position position="113"/>
    </location>
    <ligand>
        <name>DNA</name>
        <dbReference type="ChEBI" id="CHEBI:16991"/>
    </ligand>
</feature>
<feature type="binding site" evidence="2">
    <location>
        <position position="156"/>
    </location>
    <ligand>
        <name>DNA</name>
        <dbReference type="ChEBI" id="CHEBI:16991"/>
    </ligand>
</feature>
<dbReference type="EC" id="3.2.2.23" evidence="2"/>
<dbReference type="EC" id="4.2.99.18" evidence="2"/>
<dbReference type="EMBL" id="CP000009">
    <property type="protein sequence ID" value="AAW62230.1"/>
    <property type="molecule type" value="Genomic_DNA"/>
</dbReference>
<dbReference type="RefSeq" id="WP_011253997.1">
    <property type="nucleotide sequence ID" value="NC_006677.1"/>
</dbReference>
<dbReference type="SMR" id="Q5FN17"/>
<dbReference type="STRING" id="290633.GOX2500"/>
<dbReference type="KEGG" id="gox:GOX2500"/>
<dbReference type="eggNOG" id="COG0266">
    <property type="taxonomic scope" value="Bacteria"/>
</dbReference>
<dbReference type="HOGENOM" id="CLU_038423_1_1_5"/>
<dbReference type="Proteomes" id="UP000006375">
    <property type="component" value="Chromosome"/>
</dbReference>
<dbReference type="GO" id="GO:0034039">
    <property type="term" value="F:8-oxo-7,8-dihydroguanine DNA N-glycosylase activity"/>
    <property type="evidence" value="ECO:0007669"/>
    <property type="project" value="TreeGrafter"/>
</dbReference>
<dbReference type="GO" id="GO:0140078">
    <property type="term" value="F:class I DNA-(apurinic or apyrimidinic site) endonuclease activity"/>
    <property type="evidence" value="ECO:0007669"/>
    <property type="project" value="UniProtKB-EC"/>
</dbReference>
<dbReference type="GO" id="GO:0003684">
    <property type="term" value="F:damaged DNA binding"/>
    <property type="evidence" value="ECO:0007669"/>
    <property type="project" value="InterPro"/>
</dbReference>
<dbReference type="GO" id="GO:0008270">
    <property type="term" value="F:zinc ion binding"/>
    <property type="evidence" value="ECO:0007669"/>
    <property type="project" value="UniProtKB-UniRule"/>
</dbReference>
<dbReference type="GO" id="GO:0006284">
    <property type="term" value="P:base-excision repair"/>
    <property type="evidence" value="ECO:0007669"/>
    <property type="project" value="InterPro"/>
</dbReference>
<dbReference type="CDD" id="cd08966">
    <property type="entry name" value="EcFpg-like_N"/>
    <property type="match status" value="1"/>
</dbReference>
<dbReference type="FunFam" id="1.10.8.50:FF:000003">
    <property type="entry name" value="Formamidopyrimidine-DNA glycosylase"/>
    <property type="match status" value="1"/>
</dbReference>
<dbReference type="Gene3D" id="1.10.8.50">
    <property type="match status" value="1"/>
</dbReference>
<dbReference type="Gene3D" id="3.20.190.10">
    <property type="entry name" value="MutM-like, N-terminal"/>
    <property type="match status" value="1"/>
</dbReference>
<dbReference type="HAMAP" id="MF_00103">
    <property type="entry name" value="Fapy_DNA_glycosyl"/>
    <property type="match status" value="1"/>
</dbReference>
<dbReference type="InterPro" id="IPR015886">
    <property type="entry name" value="DNA_glyclase/AP_lyase_DNA-bd"/>
</dbReference>
<dbReference type="InterPro" id="IPR020629">
    <property type="entry name" value="Formamido-pyr_DNA_Glyclase"/>
</dbReference>
<dbReference type="InterPro" id="IPR012319">
    <property type="entry name" value="FPG_cat"/>
</dbReference>
<dbReference type="InterPro" id="IPR035937">
    <property type="entry name" value="MutM-like_N-ter"/>
</dbReference>
<dbReference type="InterPro" id="IPR010979">
    <property type="entry name" value="Ribosomal_uS13-like_H2TH"/>
</dbReference>
<dbReference type="InterPro" id="IPR000214">
    <property type="entry name" value="Znf_DNA_glyclase/AP_lyase"/>
</dbReference>
<dbReference type="InterPro" id="IPR010663">
    <property type="entry name" value="Znf_FPG/IleRS"/>
</dbReference>
<dbReference type="NCBIfam" id="TIGR00577">
    <property type="entry name" value="fpg"/>
    <property type="match status" value="1"/>
</dbReference>
<dbReference type="NCBIfam" id="NF002211">
    <property type="entry name" value="PRK01103.1"/>
    <property type="match status" value="1"/>
</dbReference>
<dbReference type="PANTHER" id="PTHR22993">
    <property type="entry name" value="FORMAMIDOPYRIMIDINE-DNA GLYCOSYLASE"/>
    <property type="match status" value="1"/>
</dbReference>
<dbReference type="PANTHER" id="PTHR22993:SF9">
    <property type="entry name" value="FORMAMIDOPYRIMIDINE-DNA GLYCOSYLASE"/>
    <property type="match status" value="1"/>
</dbReference>
<dbReference type="Pfam" id="PF01149">
    <property type="entry name" value="Fapy_DNA_glyco"/>
    <property type="match status" value="1"/>
</dbReference>
<dbReference type="Pfam" id="PF06831">
    <property type="entry name" value="H2TH"/>
    <property type="match status" value="1"/>
</dbReference>
<dbReference type="Pfam" id="PF06827">
    <property type="entry name" value="zf-FPG_IleRS"/>
    <property type="match status" value="1"/>
</dbReference>
<dbReference type="SMART" id="SM00898">
    <property type="entry name" value="Fapy_DNA_glyco"/>
    <property type="match status" value="1"/>
</dbReference>
<dbReference type="SMART" id="SM01232">
    <property type="entry name" value="H2TH"/>
    <property type="match status" value="1"/>
</dbReference>
<dbReference type="SUPFAM" id="SSF57716">
    <property type="entry name" value="Glucocorticoid receptor-like (DNA-binding domain)"/>
    <property type="match status" value="1"/>
</dbReference>
<dbReference type="SUPFAM" id="SSF81624">
    <property type="entry name" value="N-terminal domain of MutM-like DNA repair proteins"/>
    <property type="match status" value="1"/>
</dbReference>
<dbReference type="SUPFAM" id="SSF46946">
    <property type="entry name" value="S13-like H2TH domain"/>
    <property type="match status" value="1"/>
</dbReference>
<dbReference type="PROSITE" id="PS51068">
    <property type="entry name" value="FPG_CAT"/>
    <property type="match status" value="1"/>
</dbReference>
<dbReference type="PROSITE" id="PS51066">
    <property type="entry name" value="ZF_FPG_2"/>
    <property type="match status" value="1"/>
</dbReference>
<evidence type="ECO:0000250" key="1"/>
<evidence type="ECO:0000255" key="2">
    <source>
        <dbReference type="HAMAP-Rule" id="MF_00103"/>
    </source>
</evidence>
<accession>Q5FN17</accession>
<comment type="function">
    <text evidence="2">Involved in base excision repair of DNA damaged by oxidation or by mutagenic agents. Acts as a DNA glycosylase that recognizes and removes damaged bases. Has a preference for oxidized purines, such as 7,8-dihydro-8-oxoguanine (8-oxoG). Has AP (apurinic/apyrimidinic) lyase activity and introduces nicks in the DNA strand. Cleaves the DNA backbone by beta-delta elimination to generate a single-strand break at the site of the removed base with both 3'- and 5'-phosphates.</text>
</comment>
<comment type="catalytic activity">
    <reaction evidence="2">
        <text>Hydrolysis of DNA containing ring-opened 7-methylguanine residues, releasing 2,6-diamino-4-hydroxy-5-(N-methyl)formamidopyrimidine.</text>
        <dbReference type="EC" id="3.2.2.23"/>
    </reaction>
</comment>
<comment type="catalytic activity">
    <reaction evidence="2">
        <text>2'-deoxyribonucleotide-(2'-deoxyribose 5'-phosphate)-2'-deoxyribonucleotide-DNA = a 3'-end 2'-deoxyribonucleotide-(2,3-dehydro-2,3-deoxyribose 5'-phosphate)-DNA + a 5'-end 5'-phospho-2'-deoxyribonucleoside-DNA + H(+)</text>
        <dbReference type="Rhea" id="RHEA:66592"/>
        <dbReference type="Rhea" id="RHEA-COMP:13180"/>
        <dbReference type="Rhea" id="RHEA-COMP:16897"/>
        <dbReference type="Rhea" id="RHEA-COMP:17067"/>
        <dbReference type="ChEBI" id="CHEBI:15378"/>
        <dbReference type="ChEBI" id="CHEBI:136412"/>
        <dbReference type="ChEBI" id="CHEBI:157695"/>
        <dbReference type="ChEBI" id="CHEBI:167181"/>
        <dbReference type="EC" id="4.2.99.18"/>
    </reaction>
</comment>
<comment type="cofactor">
    <cofactor evidence="2">
        <name>Zn(2+)</name>
        <dbReference type="ChEBI" id="CHEBI:29105"/>
    </cofactor>
    <text evidence="2">Binds 1 zinc ion per subunit.</text>
</comment>
<comment type="subunit">
    <text evidence="2">Monomer.</text>
</comment>
<comment type="similarity">
    <text evidence="2">Belongs to the FPG family.</text>
</comment>
<name>FPG_GLUOX</name>